<geneLocation type="chloroplast"/>
<evidence type="ECO:0000255" key="1">
    <source>
        <dbReference type="HAMAP-Rule" id="MF_01396"/>
    </source>
</evidence>
<organism>
    <name type="scientific">Oenothera elata subsp. hookeri</name>
    <name type="common">Hooker's evening primrose</name>
    <name type="synonym">Oenothera hookeri</name>
    <dbReference type="NCBI Taxonomy" id="85636"/>
    <lineage>
        <taxon>Eukaryota</taxon>
        <taxon>Viridiplantae</taxon>
        <taxon>Streptophyta</taxon>
        <taxon>Embryophyta</taxon>
        <taxon>Tracheophyta</taxon>
        <taxon>Spermatophyta</taxon>
        <taxon>Magnoliopsida</taxon>
        <taxon>eudicotyledons</taxon>
        <taxon>Gunneridae</taxon>
        <taxon>Pentapetalae</taxon>
        <taxon>rosids</taxon>
        <taxon>malvids</taxon>
        <taxon>Myrtales</taxon>
        <taxon>Onagraceae</taxon>
        <taxon>Onagroideae</taxon>
        <taxon>Onagreae</taxon>
        <taxon>Oenothera</taxon>
    </lineage>
</organism>
<feature type="chain" id="PRO_0000112197" description="ATP synthase subunit c, chloroplastic">
    <location>
        <begin position="1"/>
        <end position="81"/>
    </location>
</feature>
<feature type="transmembrane region" description="Helical" evidence="1">
    <location>
        <begin position="7"/>
        <end position="27"/>
    </location>
</feature>
<feature type="transmembrane region" description="Helical" evidence="1">
    <location>
        <begin position="57"/>
        <end position="77"/>
    </location>
</feature>
<feature type="site" description="Reversibly protonated during proton transport" evidence="1">
    <location>
        <position position="61"/>
    </location>
</feature>
<comment type="function">
    <text evidence="1">F(1)F(0) ATP synthase produces ATP from ADP in the presence of a proton or sodium gradient. F-type ATPases consist of two structural domains, F(1) containing the extramembraneous catalytic core and F(0) containing the membrane proton channel, linked together by a central stalk and a peripheral stalk. During catalysis, ATP synthesis in the catalytic domain of F(1) is coupled via a rotary mechanism of the central stalk subunits to proton translocation.</text>
</comment>
<comment type="function">
    <text evidence="1">Key component of the F(0) channel; it plays a direct role in translocation across the membrane. A homomeric c-ring of between 10-14 subunits forms the central stalk rotor element with the F(1) delta and epsilon subunits.</text>
</comment>
<comment type="subunit">
    <text evidence="1">F-type ATPases have 2 components, F(1) - the catalytic core - and F(0) - the membrane proton channel. F(1) has five subunits: alpha(3), beta(3), gamma(1), delta(1), epsilon(1). F(0) has four main subunits: a(1), b(1), b'(1) and c(10-14). The alpha and beta chains form an alternating ring which encloses part of the gamma chain. F(1) is attached to F(0) by a central stalk formed by the gamma and epsilon chains, while a peripheral stalk is formed by the delta, b and b' chains.</text>
</comment>
<comment type="subcellular location">
    <subcellularLocation>
        <location evidence="1">Plastid</location>
        <location evidence="1">Chloroplast thylakoid membrane</location>
        <topology evidence="1">Multi-pass membrane protein</topology>
    </subcellularLocation>
</comment>
<comment type="miscellaneous">
    <text>In plastids the F-type ATPase is also known as CF(1)CF(0).</text>
</comment>
<comment type="similarity">
    <text evidence="1">Belongs to the ATPase C chain family.</text>
</comment>
<gene>
    <name evidence="1" type="primary">atpH</name>
</gene>
<protein>
    <recommendedName>
        <fullName evidence="1">ATP synthase subunit c, chloroplastic</fullName>
    </recommendedName>
    <alternativeName>
        <fullName evidence="1">ATP synthase F(0) sector subunit c</fullName>
    </alternativeName>
    <alternativeName>
        <fullName evidence="1">ATPase subunit III</fullName>
    </alternativeName>
    <alternativeName>
        <fullName evidence="1">F-type ATPase subunit c</fullName>
        <shortName evidence="1">F-ATPase subunit c</shortName>
    </alternativeName>
    <alternativeName>
        <fullName evidence="1">Lipid-binding protein</fullName>
    </alternativeName>
</protein>
<accession>P62480</accession>
<accession>P06287</accession>
<name>ATPH_OENEH</name>
<proteinExistence type="inferred from homology"/>
<sequence>MNPLISAASVIAAGLAVGLASIGPGIGQGTAAGQAVEGIARQPEAEGKIRGTLLLSLAFMEALTIYGLVVALALLFANPFV</sequence>
<reference key="1">
    <citation type="journal article" date="2000" name="Mol. Gen. Genet.">
        <title>Complete nucleotide sequence of the Oenothera elata plastid chromosome, representing plastome I of the five distinguishable Euoenothera plastomes.</title>
        <authorList>
            <person name="Hupfer H."/>
            <person name="Swiatek M."/>
            <person name="Hornung S."/>
            <person name="Herrmann R.G."/>
            <person name="Maier R.M."/>
            <person name="Chiu W.-L."/>
            <person name="Sears B."/>
        </authorList>
    </citation>
    <scope>NUCLEOTIDE SEQUENCE [LARGE SCALE GENOMIC DNA]</scope>
    <source>
        <strain>cv. Johansen</strain>
    </source>
</reference>
<dbReference type="EMBL" id="AJ271079">
    <property type="protein sequence ID" value="CAB67158.1"/>
    <property type="molecule type" value="Genomic_DNA"/>
</dbReference>
<dbReference type="RefSeq" id="NP_084693.1">
    <property type="nucleotide sequence ID" value="NC_002693.2"/>
</dbReference>
<dbReference type="SMR" id="P62480"/>
<dbReference type="GeneID" id="802797"/>
<dbReference type="GO" id="GO:0009535">
    <property type="term" value="C:chloroplast thylakoid membrane"/>
    <property type="evidence" value="ECO:0007669"/>
    <property type="project" value="UniProtKB-SubCell"/>
</dbReference>
<dbReference type="GO" id="GO:0045259">
    <property type="term" value="C:proton-transporting ATP synthase complex"/>
    <property type="evidence" value="ECO:0007669"/>
    <property type="project" value="UniProtKB-KW"/>
</dbReference>
<dbReference type="GO" id="GO:0033177">
    <property type="term" value="C:proton-transporting two-sector ATPase complex, proton-transporting domain"/>
    <property type="evidence" value="ECO:0007669"/>
    <property type="project" value="InterPro"/>
</dbReference>
<dbReference type="GO" id="GO:0008289">
    <property type="term" value="F:lipid binding"/>
    <property type="evidence" value="ECO:0007669"/>
    <property type="project" value="UniProtKB-KW"/>
</dbReference>
<dbReference type="GO" id="GO:0046933">
    <property type="term" value="F:proton-transporting ATP synthase activity, rotational mechanism"/>
    <property type="evidence" value="ECO:0007669"/>
    <property type="project" value="UniProtKB-UniRule"/>
</dbReference>
<dbReference type="CDD" id="cd18183">
    <property type="entry name" value="ATP-synt_Fo_c_ATPH"/>
    <property type="match status" value="1"/>
</dbReference>
<dbReference type="FunFam" id="1.20.20.10:FF:000001">
    <property type="entry name" value="ATP synthase subunit c, chloroplastic"/>
    <property type="match status" value="1"/>
</dbReference>
<dbReference type="Gene3D" id="1.20.20.10">
    <property type="entry name" value="F1F0 ATP synthase subunit C"/>
    <property type="match status" value="1"/>
</dbReference>
<dbReference type="HAMAP" id="MF_01396">
    <property type="entry name" value="ATP_synth_c_bact"/>
    <property type="match status" value="1"/>
</dbReference>
<dbReference type="InterPro" id="IPR005953">
    <property type="entry name" value="ATP_synth_csu_bac/chlpt"/>
</dbReference>
<dbReference type="InterPro" id="IPR000454">
    <property type="entry name" value="ATP_synth_F0_csu"/>
</dbReference>
<dbReference type="InterPro" id="IPR020537">
    <property type="entry name" value="ATP_synth_F0_csu_DDCD_BS"/>
</dbReference>
<dbReference type="InterPro" id="IPR038662">
    <property type="entry name" value="ATP_synth_F0_csu_sf"/>
</dbReference>
<dbReference type="InterPro" id="IPR002379">
    <property type="entry name" value="ATPase_proteolipid_c-like_dom"/>
</dbReference>
<dbReference type="InterPro" id="IPR035921">
    <property type="entry name" value="F/V-ATP_Csub_sf"/>
</dbReference>
<dbReference type="NCBIfam" id="TIGR01260">
    <property type="entry name" value="ATP_synt_c"/>
    <property type="match status" value="1"/>
</dbReference>
<dbReference type="NCBIfam" id="NF005608">
    <property type="entry name" value="PRK07354.1"/>
    <property type="match status" value="1"/>
</dbReference>
<dbReference type="PANTHER" id="PTHR10031">
    <property type="entry name" value="ATP SYNTHASE LIPID-BINDING PROTEIN, MITOCHONDRIAL"/>
    <property type="match status" value="1"/>
</dbReference>
<dbReference type="PANTHER" id="PTHR10031:SF0">
    <property type="entry name" value="ATPASE PROTEIN 9"/>
    <property type="match status" value="1"/>
</dbReference>
<dbReference type="Pfam" id="PF00137">
    <property type="entry name" value="ATP-synt_C"/>
    <property type="match status" value="1"/>
</dbReference>
<dbReference type="PRINTS" id="PR00124">
    <property type="entry name" value="ATPASEC"/>
</dbReference>
<dbReference type="SUPFAM" id="SSF81333">
    <property type="entry name" value="F1F0 ATP synthase subunit C"/>
    <property type="match status" value="1"/>
</dbReference>
<dbReference type="PROSITE" id="PS00605">
    <property type="entry name" value="ATPASE_C"/>
    <property type="match status" value="1"/>
</dbReference>
<keyword id="KW-0066">ATP synthesis</keyword>
<keyword id="KW-0138">CF(0)</keyword>
<keyword id="KW-0150">Chloroplast</keyword>
<keyword id="KW-0375">Hydrogen ion transport</keyword>
<keyword id="KW-0406">Ion transport</keyword>
<keyword id="KW-0446">Lipid-binding</keyword>
<keyword id="KW-0472">Membrane</keyword>
<keyword id="KW-0934">Plastid</keyword>
<keyword id="KW-0793">Thylakoid</keyword>
<keyword id="KW-0812">Transmembrane</keyword>
<keyword id="KW-1133">Transmembrane helix</keyword>
<keyword id="KW-0813">Transport</keyword>